<keyword id="KW-0965">Cell junction</keyword>
<keyword id="KW-0963">Cytoplasm</keyword>
<keyword id="KW-0206">Cytoskeleton</keyword>
<keyword id="KW-0440">LIM domain</keyword>
<keyword id="KW-0479">Metal-binding</keyword>
<keyword id="KW-0597">Phosphoprotein</keyword>
<keyword id="KW-1185">Reference proteome</keyword>
<keyword id="KW-0862">Zinc</keyword>
<comment type="function">
    <text evidence="1">May be involved in the regulation of cellular proliferation and/or differentiation.</text>
</comment>
<comment type="subcellular location">
    <subcellularLocation>
        <location evidence="1">Cytoplasm</location>
        <location evidence="1">Cytoskeleton</location>
    </subcellularLocation>
    <subcellularLocation>
        <location evidence="1">Cell junction</location>
        <location evidence="1">Focal adhesion</location>
    </subcellularLocation>
</comment>
<comment type="tissue specificity">
    <text>Expressed in skin, kidney, ovary, testis. Also expressed in brain, cartilage, heart, lung, spleen and thymus.</text>
</comment>
<comment type="developmental stage">
    <text>At 14.5 dpc, only expressed in mesenchymal cells. At 16.5 dpc expressed also in cells lining the vertebrae and tendons of the proximal tail. In late embryogenesis, expressed in mesenchymal cells adjacent to the distal limb bones (tibia and calcaneum), in tendons and in the connective tissue sheath (epimysium) surrounding the skeletal muscle. Also expressed in the epithelia of the epididymis of the testis.</text>
</comment>
<name>ZN185_MOUSE</name>
<gene>
    <name type="primary">Znf185</name>
    <name type="synonym">Zfp185</name>
</gene>
<accession>Q62394</accession>
<feature type="chain" id="PRO_0000075912" description="Zinc finger protein 185">
    <location>
        <begin position="1"/>
        <end position="352"/>
    </location>
</feature>
<feature type="domain" description="LIM zinc-binding" evidence="3">
    <location>
        <begin position="292"/>
        <end position="347"/>
    </location>
</feature>
<feature type="region of interest" description="Disordered" evidence="4">
    <location>
        <begin position="1"/>
        <end position="73"/>
    </location>
</feature>
<feature type="region of interest" description="Disordered" evidence="4">
    <location>
        <begin position="86"/>
        <end position="121"/>
    </location>
</feature>
<feature type="region of interest" description="Disordered" evidence="4">
    <location>
        <begin position="251"/>
        <end position="287"/>
    </location>
</feature>
<feature type="compositionally biased region" description="Polar residues" evidence="4">
    <location>
        <begin position="61"/>
        <end position="72"/>
    </location>
</feature>
<feature type="compositionally biased region" description="Polar residues" evidence="4">
    <location>
        <begin position="251"/>
        <end position="268"/>
    </location>
</feature>
<feature type="compositionally biased region" description="Basic and acidic residues" evidence="4">
    <location>
        <begin position="272"/>
        <end position="287"/>
    </location>
</feature>
<feature type="modified residue" description="Phosphoserine" evidence="5">
    <location>
        <position position="18"/>
    </location>
</feature>
<feature type="modified residue" description="Phosphothreonine" evidence="2">
    <location>
        <position position="137"/>
    </location>
</feature>
<proteinExistence type="evidence at protein level"/>
<evidence type="ECO:0000250" key="1"/>
<evidence type="ECO:0000250" key="2">
    <source>
        <dbReference type="UniProtKB" id="O15231"/>
    </source>
</evidence>
<evidence type="ECO:0000255" key="3">
    <source>
        <dbReference type="PROSITE-ProRule" id="PRU00125"/>
    </source>
</evidence>
<evidence type="ECO:0000256" key="4">
    <source>
        <dbReference type="SAM" id="MobiDB-lite"/>
    </source>
</evidence>
<evidence type="ECO:0007744" key="5">
    <source>
    </source>
</evidence>
<organism>
    <name type="scientific">Mus musculus</name>
    <name type="common">Mouse</name>
    <dbReference type="NCBI Taxonomy" id="10090"/>
    <lineage>
        <taxon>Eukaryota</taxon>
        <taxon>Metazoa</taxon>
        <taxon>Chordata</taxon>
        <taxon>Craniata</taxon>
        <taxon>Vertebrata</taxon>
        <taxon>Euteleostomi</taxon>
        <taxon>Mammalia</taxon>
        <taxon>Eutheria</taxon>
        <taxon>Euarchontoglires</taxon>
        <taxon>Glires</taxon>
        <taxon>Rodentia</taxon>
        <taxon>Myomorpha</taxon>
        <taxon>Muroidea</taxon>
        <taxon>Muridae</taxon>
        <taxon>Murinae</taxon>
        <taxon>Mus</taxon>
        <taxon>Mus</taxon>
    </lineage>
</organism>
<reference key="1">
    <citation type="journal article" date="1996" name="Genome Res.">
        <title>A comparative transcription map of the murine bare patches (Bpa) and striated (Str) critical regions and human Xq28.</title>
        <authorList>
            <person name="Levin M.L."/>
            <person name="Chatterjee A."/>
            <person name="Pragliola A."/>
            <person name="Worley K.C."/>
            <person name="Wehnert M."/>
            <person name="Zhuchenko O."/>
            <person name="Smith R.F."/>
            <person name="Lee C.C."/>
            <person name="Herman G.E."/>
        </authorList>
    </citation>
    <scope>NUCLEOTIDE SEQUENCE [MRNA]</scope>
</reference>
<reference key="2">
    <citation type="journal article" date="2010" name="Cell">
        <title>A tissue-specific atlas of mouse protein phosphorylation and expression.</title>
        <authorList>
            <person name="Huttlin E.L."/>
            <person name="Jedrychowski M.P."/>
            <person name="Elias J.E."/>
            <person name="Goswami T."/>
            <person name="Rad R."/>
            <person name="Beausoleil S.A."/>
            <person name="Villen J."/>
            <person name="Haas W."/>
            <person name="Sowa M.E."/>
            <person name="Gygi S.P."/>
        </authorList>
    </citation>
    <scope>PHOSPHORYLATION [LARGE SCALE ANALYSIS] AT SER-18</scope>
    <scope>IDENTIFICATION BY MASS SPECTROMETRY [LARGE SCALE ANALYSIS]</scope>
    <source>
        <tissue>Brown adipose tissue</tissue>
        <tissue>Kidney</tissue>
        <tissue>Lung</tissue>
        <tissue>Spleen</tissue>
        <tissue>Testis</tissue>
    </source>
</reference>
<protein>
    <recommendedName>
        <fullName>Zinc finger protein 185</fullName>
    </recommendedName>
    <alternativeName>
        <fullName>LIM domain protein Zfp185</fullName>
    </alternativeName>
    <alternativeName>
        <fullName>P1-A</fullName>
    </alternativeName>
</protein>
<sequence length="352" mass="38322">MTTEDYKKLAPYNIRRSSISGTEEEEVPFTPDEQKRRSQAALGVLRKTAPREHSYVLSAAKKTTSSPTQELQSPFLAKRVDVVDEDVLPEKNQEPPALARPDSGLSSSTTEKIAHRQITPPTAELHLVAPDLEALSTPDSCEENNAAPKIIKEIPGTLQDGQSDPTVASQQLADLSILEPLGSPSGAEQQIKAEDCTNMLMSPSSCMVTVTVSDTSEQSQLCVPGVSSKVDSSSTIKGILFVKEYMNTSEVSSGKPVSSHCDSPSSIEDSLDLAKKPPHEGTPSERPTEGVCTYCSHEIQDCPKITLEHLGICCHEYCFKCGICNKPMGDLLDQIFIHRDTIHCGKCYEKLF</sequence>
<dbReference type="EMBL" id="U46687">
    <property type="protein sequence ID" value="AAC52628.1"/>
    <property type="molecule type" value="mRNA"/>
</dbReference>
<dbReference type="RefSeq" id="NP_001102513.1">
    <property type="nucleotide sequence ID" value="NM_001109043.1"/>
</dbReference>
<dbReference type="RefSeq" id="NP_033575.3">
    <property type="nucleotide sequence ID" value="NM_009549.3"/>
</dbReference>
<dbReference type="BioGRID" id="204646">
    <property type="interactions" value="2"/>
</dbReference>
<dbReference type="FunCoup" id="Q62394">
    <property type="interactions" value="46"/>
</dbReference>
<dbReference type="STRING" id="10090.ENSMUSP00000126066"/>
<dbReference type="iPTMnet" id="Q62394"/>
<dbReference type="PhosphoSitePlus" id="Q62394"/>
<dbReference type="jPOST" id="Q62394"/>
<dbReference type="PaxDb" id="10090-ENSMUSP00000110193"/>
<dbReference type="PeptideAtlas" id="Q62394"/>
<dbReference type="ProteomicsDB" id="275004"/>
<dbReference type="DNASU" id="22673"/>
<dbReference type="GeneID" id="22673"/>
<dbReference type="KEGG" id="mmu:22673"/>
<dbReference type="AGR" id="MGI:108095"/>
<dbReference type="CTD" id="22673"/>
<dbReference type="MGI" id="MGI:108095">
    <property type="gene designation" value="Zfp185"/>
</dbReference>
<dbReference type="eggNOG" id="KOG1704">
    <property type="taxonomic scope" value="Eukaryota"/>
</dbReference>
<dbReference type="InParanoid" id="Q62394"/>
<dbReference type="OrthoDB" id="8909291at2759"/>
<dbReference type="BioGRID-ORCS" id="22673">
    <property type="hits" value="3 hits in 77 CRISPR screens"/>
</dbReference>
<dbReference type="PRO" id="PR:Q62394"/>
<dbReference type="Proteomes" id="UP000000589">
    <property type="component" value="Unplaced"/>
</dbReference>
<dbReference type="RNAct" id="Q62394">
    <property type="molecule type" value="protein"/>
</dbReference>
<dbReference type="GO" id="GO:0005737">
    <property type="term" value="C:cytoplasm"/>
    <property type="evidence" value="ECO:0007669"/>
    <property type="project" value="UniProtKB-KW"/>
</dbReference>
<dbReference type="GO" id="GO:0005856">
    <property type="term" value="C:cytoskeleton"/>
    <property type="evidence" value="ECO:0007669"/>
    <property type="project" value="UniProtKB-SubCell"/>
</dbReference>
<dbReference type="GO" id="GO:0005925">
    <property type="term" value="C:focal adhesion"/>
    <property type="evidence" value="ECO:0007669"/>
    <property type="project" value="UniProtKB-SubCell"/>
</dbReference>
<dbReference type="GO" id="GO:0046872">
    <property type="term" value="F:metal ion binding"/>
    <property type="evidence" value="ECO:0007669"/>
    <property type="project" value="UniProtKB-KW"/>
</dbReference>
<dbReference type="CDD" id="cd08368">
    <property type="entry name" value="LIM"/>
    <property type="match status" value="1"/>
</dbReference>
<dbReference type="Gene3D" id="2.10.110.10">
    <property type="entry name" value="Cysteine Rich Protein"/>
    <property type="match status" value="1"/>
</dbReference>
<dbReference type="InterPro" id="IPR052621">
    <property type="entry name" value="Cell_Prolif/Cornif_Regul"/>
</dbReference>
<dbReference type="InterPro" id="IPR001781">
    <property type="entry name" value="Znf_LIM"/>
</dbReference>
<dbReference type="PANTHER" id="PTHR15468:SF2">
    <property type="entry name" value="ZINC FINGER PROTEIN 185"/>
    <property type="match status" value="1"/>
</dbReference>
<dbReference type="PANTHER" id="PTHR15468">
    <property type="entry name" value="ZNF185"/>
    <property type="match status" value="1"/>
</dbReference>
<dbReference type="SMART" id="SM00132">
    <property type="entry name" value="LIM"/>
    <property type="match status" value="1"/>
</dbReference>
<dbReference type="PROSITE" id="PS00478">
    <property type="entry name" value="LIM_DOMAIN_1"/>
    <property type="match status" value="1"/>
</dbReference>
<dbReference type="PROSITE" id="PS50023">
    <property type="entry name" value="LIM_DOMAIN_2"/>
    <property type="match status" value="1"/>
</dbReference>